<name>RL3_STRP6</name>
<evidence type="ECO:0000255" key="1">
    <source>
        <dbReference type="HAMAP-Rule" id="MF_01325"/>
    </source>
</evidence>
<evidence type="ECO:0000256" key="2">
    <source>
        <dbReference type="SAM" id="MobiDB-lite"/>
    </source>
</evidence>
<evidence type="ECO:0000305" key="3"/>
<organism>
    <name type="scientific">Streptococcus pyogenes serotype M6 (strain ATCC BAA-946 / MGAS10394)</name>
    <dbReference type="NCBI Taxonomy" id="286636"/>
    <lineage>
        <taxon>Bacteria</taxon>
        <taxon>Bacillati</taxon>
        <taxon>Bacillota</taxon>
        <taxon>Bacilli</taxon>
        <taxon>Lactobacillales</taxon>
        <taxon>Streptococcaceae</taxon>
        <taxon>Streptococcus</taxon>
    </lineage>
</organism>
<reference key="1">
    <citation type="journal article" date="2004" name="J. Infect. Dis.">
        <title>Progress toward characterization of the group A Streptococcus metagenome: complete genome sequence of a macrolide-resistant serotype M6 strain.</title>
        <authorList>
            <person name="Banks D.J."/>
            <person name="Porcella S.F."/>
            <person name="Barbian K.D."/>
            <person name="Beres S.B."/>
            <person name="Philips L.E."/>
            <person name="Voyich J.M."/>
            <person name="DeLeo F.R."/>
            <person name="Martin J.M."/>
            <person name="Somerville G.A."/>
            <person name="Musser J.M."/>
        </authorList>
    </citation>
    <scope>NUCLEOTIDE SEQUENCE [LARGE SCALE GENOMIC DNA]</scope>
    <source>
        <strain>ATCC BAA-946 / MGAS10394</strain>
    </source>
</reference>
<dbReference type="EMBL" id="CP000003">
    <property type="protein sequence ID" value="AAT86228.1"/>
    <property type="molecule type" value="Genomic_DNA"/>
</dbReference>
<dbReference type="RefSeq" id="WP_011184075.1">
    <property type="nucleotide sequence ID" value="NC_006086.1"/>
</dbReference>
<dbReference type="SMR" id="Q5XED5"/>
<dbReference type="KEGG" id="spa:M6_Spy0093"/>
<dbReference type="HOGENOM" id="CLU_044142_4_1_9"/>
<dbReference type="Proteomes" id="UP000001167">
    <property type="component" value="Chromosome"/>
</dbReference>
<dbReference type="GO" id="GO:0022625">
    <property type="term" value="C:cytosolic large ribosomal subunit"/>
    <property type="evidence" value="ECO:0007669"/>
    <property type="project" value="TreeGrafter"/>
</dbReference>
<dbReference type="GO" id="GO:0019843">
    <property type="term" value="F:rRNA binding"/>
    <property type="evidence" value="ECO:0007669"/>
    <property type="project" value="UniProtKB-UniRule"/>
</dbReference>
<dbReference type="GO" id="GO:0003735">
    <property type="term" value="F:structural constituent of ribosome"/>
    <property type="evidence" value="ECO:0007669"/>
    <property type="project" value="InterPro"/>
</dbReference>
<dbReference type="GO" id="GO:0006412">
    <property type="term" value="P:translation"/>
    <property type="evidence" value="ECO:0007669"/>
    <property type="project" value="UniProtKB-UniRule"/>
</dbReference>
<dbReference type="FunFam" id="2.40.30.10:FF:000004">
    <property type="entry name" value="50S ribosomal protein L3"/>
    <property type="match status" value="1"/>
</dbReference>
<dbReference type="FunFam" id="3.30.160.810:FF:000002">
    <property type="entry name" value="50S ribosomal protein L3"/>
    <property type="match status" value="1"/>
</dbReference>
<dbReference type="Gene3D" id="3.30.160.810">
    <property type="match status" value="1"/>
</dbReference>
<dbReference type="Gene3D" id="2.40.30.10">
    <property type="entry name" value="Translation factors"/>
    <property type="match status" value="1"/>
</dbReference>
<dbReference type="HAMAP" id="MF_01325_B">
    <property type="entry name" value="Ribosomal_uL3_B"/>
    <property type="match status" value="1"/>
</dbReference>
<dbReference type="InterPro" id="IPR000597">
    <property type="entry name" value="Ribosomal_uL3"/>
</dbReference>
<dbReference type="InterPro" id="IPR019927">
    <property type="entry name" value="Ribosomal_uL3_bac/org-type"/>
</dbReference>
<dbReference type="InterPro" id="IPR019926">
    <property type="entry name" value="Ribosomal_uL3_CS"/>
</dbReference>
<dbReference type="InterPro" id="IPR009000">
    <property type="entry name" value="Transl_B-barrel_sf"/>
</dbReference>
<dbReference type="NCBIfam" id="TIGR03625">
    <property type="entry name" value="L3_bact"/>
    <property type="match status" value="1"/>
</dbReference>
<dbReference type="PANTHER" id="PTHR11229">
    <property type="entry name" value="50S RIBOSOMAL PROTEIN L3"/>
    <property type="match status" value="1"/>
</dbReference>
<dbReference type="PANTHER" id="PTHR11229:SF16">
    <property type="entry name" value="LARGE RIBOSOMAL SUBUNIT PROTEIN UL3C"/>
    <property type="match status" value="1"/>
</dbReference>
<dbReference type="Pfam" id="PF00297">
    <property type="entry name" value="Ribosomal_L3"/>
    <property type="match status" value="1"/>
</dbReference>
<dbReference type="SUPFAM" id="SSF50447">
    <property type="entry name" value="Translation proteins"/>
    <property type="match status" value="1"/>
</dbReference>
<dbReference type="PROSITE" id="PS00474">
    <property type="entry name" value="RIBOSOMAL_L3"/>
    <property type="match status" value="1"/>
</dbReference>
<keyword id="KW-0687">Ribonucleoprotein</keyword>
<keyword id="KW-0689">Ribosomal protein</keyword>
<keyword id="KW-0694">RNA-binding</keyword>
<keyword id="KW-0699">rRNA-binding</keyword>
<comment type="function">
    <text evidence="1">One of the primary rRNA binding proteins, it binds directly near the 3'-end of the 23S rRNA, where it nucleates assembly of the 50S subunit.</text>
</comment>
<comment type="subunit">
    <text evidence="1">Part of the 50S ribosomal subunit. Forms a cluster with proteins L14 and L19.</text>
</comment>
<comment type="similarity">
    <text evidence="1">Belongs to the universal ribosomal protein uL3 family.</text>
</comment>
<protein>
    <recommendedName>
        <fullName evidence="1">Large ribosomal subunit protein uL3</fullName>
    </recommendedName>
    <alternativeName>
        <fullName evidence="3">50S ribosomal protein L3</fullName>
    </alternativeName>
</protein>
<gene>
    <name evidence="1" type="primary">rplC</name>
    <name type="ordered locus">M6_Spy0093</name>
</gene>
<sequence length="208" mass="22442">MTKGILGKKVGMTQIFTESGEFIPVTVIEATPNVVLQVKTVETDGYEAVQVGFDDKREVLSNKPAKGHVAKANTAPKRFIREFKNIEGLEVGAELSVEQFEAGDVVDVTGTSKGKGFQGVIKRHGQSRGPMAHGSRYHRRPGSMGPVAPNRVFKNKRLAGRMGGNRVTVQNLEIVQVILEKNVILVKGNVPGAKKSLITIKSAVKAAK</sequence>
<proteinExistence type="inferred from homology"/>
<feature type="chain" id="PRO_0000077172" description="Large ribosomal subunit protein uL3">
    <location>
        <begin position="1"/>
        <end position="208"/>
    </location>
</feature>
<feature type="region of interest" description="Disordered" evidence="2">
    <location>
        <begin position="116"/>
        <end position="148"/>
    </location>
</feature>
<accession>Q5XED5</accession>